<evidence type="ECO:0000250" key="1"/>
<evidence type="ECO:0000255" key="2"/>
<evidence type="ECO:0000269" key="3">
    <source>
    </source>
</evidence>
<evidence type="ECO:0000269" key="4">
    <source>
    </source>
</evidence>
<evidence type="ECO:0000269" key="5">
    <source>
    </source>
</evidence>
<evidence type="ECO:0000269" key="6">
    <source>
    </source>
</evidence>
<evidence type="ECO:0000269" key="7">
    <source>
    </source>
</evidence>
<evidence type="ECO:0000269" key="8">
    <source>
    </source>
</evidence>
<evidence type="ECO:0000303" key="9">
    <source>
    </source>
</evidence>
<evidence type="ECO:0000305" key="10"/>
<evidence type="ECO:0007744" key="11">
    <source>
    </source>
</evidence>
<evidence type="ECO:0007829" key="12">
    <source>
        <dbReference type="PDB" id="8J6Z"/>
    </source>
</evidence>
<gene>
    <name evidence="9" type="primary">LHCA4</name>
    <name type="synonym">CAB4</name>
    <name type="ordered locus">At3g47470</name>
    <name type="ORF">F1P2.20</name>
</gene>
<keyword id="KW-0002">3D-structure</keyword>
<keyword id="KW-0148">Chlorophyll</keyword>
<keyword id="KW-0150">Chloroplast</keyword>
<keyword id="KW-0157">Chromophore</keyword>
<keyword id="KW-0460">Magnesium</keyword>
<keyword id="KW-0472">Membrane</keyword>
<keyword id="KW-0479">Metal-binding</keyword>
<keyword id="KW-0597">Phosphoprotein</keyword>
<keyword id="KW-0602">Photosynthesis</keyword>
<keyword id="KW-0603">Photosystem I</keyword>
<keyword id="KW-0934">Plastid</keyword>
<keyword id="KW-1185">Reference proteome</keyword>
<keyword id="KW-0793">Thylakoid</keyword>
<keyword id="KW-0809">Transit peptide</keyword>
<keyword id="KW-0812">Transmembrane</keyword>
<keyword id="KW-1133">Transmembrane helix</keyword>
<dbReference type="EMBL" id="M63931">
    <property type="protein sequence ID" value="AAA32760.1"/>
    <property type="molecule type" value="mRNA"/>
</dbReference>
<dbReference type="EMBL" id="AL132955">
    <property type="protein sequence ID" value="CAB61973.1"/>
    <property type="molecule type" value="Genomic_DNA"/>
</dbReference>
<dbReference type="EMBL" id="CP002686">
    <property type="protein sequence ID" value="AEE78285.1"/>
    <property type="molecule type" value="Genomic_DNA"/>
</dbReference>
<dbReference type="EMBL" id="AY093080">
    <property type="protein sequence ID" value="AAM13079.1"/>
    <property type="molecule type" value="mRNA"/>
</dbReference>
<dbReference type="EMBL" id="BT000093">
    <property type="protein sequence ID" value="AAN15412.1"/>
    <property type="molecule type" value="mRNA"/>
</dbReference>
<dbReference type="EMBL" id="AY086470">
    <property type="protein sequence ID" value="AAM63472.1"/>
    <property type="molecule type" value="mRNA"/>
</dbReference>
<dbReference type="PIR" id="T45707">
    <property type="entry name" value="T45707"/>
</dbReference>
<dbReference type="RefSeq" id="NP_190331.3">
    <property type="nucleotide sequence ID" value="NM_114615.4"/>
</dbReference>
<dbReference type="PDB" id="7WFD">
    <property type="method" value="EM"/>
    <property type="resolution" value="3.25 A"/>
    <property type="chains" value="A4=1-251"/>
</dbReference>
<dbReference type="PDB" id="7WG5">
    <property type="method" value="EM"/>
    <property type="resolution" value="3.89 A"/>
    <property type="chains" value="A4=1-251"/>
</dbReference>
<dbReference type="PDB" id="8J6Z">
    <property type="method" value="EM"/>
    <property type="resolution" value="2.79 A"/>
    <property type="chains" value="4=1-251"/>
</dbReference>
<dbReference type="PDB" id="8J7A">
    <property type="method" value="EM"/>
    <property type="resolution" value="3.06 A"/>
    <property type="chains" value="4=1-251"/>
</dbReference>
<dbReference type="PDB" id="8J7B">
    <property type="method" value="EM"/>
    <property type="resolution" value="3.22 A"/>
    <property type="chains" value="4=1-251"/>
</dbReference>
<dbReference type="PDBsum" id="7WFD"/>
<dbReference type="PDBsum" id="7WG5"/>
<dbReference type="PDBsum" id="8J6Z"/>
<dbReference type="PDBsum" id="8J7A"/>
<dbReference type="PDBsum" id="8J7B"/>
<dbReference type="EMDB" id="EMD-32462"/>
<dbReference type="EMDB" id="EMD-32477"/>
<dbReference type="EMDB" id="EMD-36021"/>
<dbReference type="EMDB" id="EMD-36036"/>
<dbReference type="EMDB" id="EMD-36037"/>
<dbReference type="SMR" id="P27521"/>
<dbReference type="BioGRID" id="9221">
    <property type="interactions" value="38"/>
</dbReference>
<dbReference type="FunCoup" id="P27521">
    <property type="interactions" value="1060"/>
</dbReference>
<dbReference type="IntAct" id="P27521">
    <property type="interactions" value="1"/>
</dbReference>
<dbReference type="STRING" id="3702.P27521"/>
<dbReference type="iPTMnet" id="P27521"/>
<dbReference type="PaxDb" id="3702-AT3G47470.1"/>
<dbReference type="ProteomicsDB" id="223854"/>
<dbReference type="EnsemblPlants" id="AT3G47470.1">
    <property type="protein sequence ID" value="AT3G47470.1"/>
    <property type="gene ID" value="AT3G47470"/>
</dbReference>
<dbReference type="GeneID" id="823901"/>
<dbReference type="Gramene" id="AT3G47470.1">
    <property type="protein sequence ID" value="AT3G47470.1"/>
    <property type="gene ID" value="AT3G47470"/>
</dbReference>
<dbReference type="KEGG" id="ath:AT3G47470"/>
<dbReference type="Araport" id="AT3G47470"/>
<dbReference type="TAIR" id="AT3G47470">
    <property type="gene designation" value="LHCA4"/>
</dbReference>
<dbReference type="eggNOG" id="ENOG502QSBP">
    <property type="taxonomic scope" value="Eukaryota"/>
</dbReference>
<dbReference type="HOGENOM" id="CLU_057943_6_0_1"/>
<dbReference type="InParanoid" id="P27521"/>
<dbReference type="OMA" id="RPCINSK"/>
<dbReference type="OrthoDB" id="423598at2759"/>
<dbReference type="PhylomeDB" id="P27521"/>
<dbReference type="CD-CODE" id="4299E36E">
    <property type="entry name" value="Nucleolus"/>
</dbReference>
<dbReference type="PRO" id="PR:P27521"/>
<dbReference type="Proteomes" id="UP000006548">
    <property type="component" value="Chromosome 3"/>
</dbReference>
<dbReference type="ExpressionAtlas" id="P27521">
    <property type="expression patterns" value="baseline and differential"/>
</dbReference>
<dbReference type="GO" id="GO:0009507">
    <property type="term" value="C:chloroplast"/>
    <property type="evidence" value="ECO:0007005"/>
    <property type="project" value="TAIR"/>
</dbReference>
<dbReference type="GO" id="GO:0009941">
    <property type="term" value="C:chloroplast envelope"/>
    <property type="evidence" value="ECO:0007005"/>
    <property type="project" value="TAIR"/>
</dbReference>
<dbReference type="GO" id="GO:0009534">
    <property type="term" value="C:chloroplast thylakoid"/>
    <property type="evidence" value="ECO:0007005"/>
    <property type="project" value="TAIR"/>
</dbReference>
<dbReference type="GO" id="GO:0009535">
    <property type="term" value="C:chloroplast thylakoid membrane"/>
    <property type="evidence" value="ECO:0000314"/>
    <property type="project" value="UniProtKB"/>
</dbReference>
<dbReference type="GO" id="GO:0005829">
    <property type="term" value="C:cytosol"/>
    <property type="evidence" value="ECO:0007005"/>
    <property type="project" value="TAIR"/>
</dbReference>
<dbReference type="GO" id="GO:0009522">
    <property type="term" value="C:photosystem I"/>
    <property type="evidence" value="ECO:0007669"/>
    <property type="project" value="UniProtKB-KW"/>
</dbReference>
<dbReference type="GO" id="GO:0009579">
    <property type="term" value="C:thylakoid"/>
    <property type="evidence" value="ECO:0007005"/>
    <property type="project" value="TAIR"/>
</dbReference>
<dbReference type="GO" id="GO:0016168">
    <property type="term" value="F:chlorophyll binding"/>
    <property type="evidence" value="ECO:0007669"/>
    <property type="project" value="UniProtKB-KW"/>
</dbReference>
<dbReference type="GO" id="GO:0046872">
    <property type="term" value="F:metal ion binding"/>
    <property type="evidence" value="ECO:0007669"/>
    <property type="project" value="UniProtKB-KW"/>
</dbReference>
<dbReference type="GO" id="GO:0003729">
    <property type="term" value="F:mRNA binding"/>
    <property type="evidence" value="ECO:0000314"/>
    <property type="project" value="TAIR"/>
</dbReference>
<dbReference type="GO" id="GO:0019904">
    <property type="term" value="F:protein domain specific binding"/>
    <property type="evidence" value="ECO:0000353"/>
    <property type="project" value="CAFA"/>
</dbReference>
<dbReference type="GO" id="GO:0009768">
    <property type="term" value="P:photosynthesis, light harvesting in photosystem I"/>
    <property type="evidence" value="ECO:0000314"/>
    <property type="project" value="UniProtKB"/>
</dbReference>
<dbReference type="GO" id="GO:0009409">
    <property type="term" value="P:response to cold"/>
    <property type="evidence" value="ECO:0000270"/>
    <property type="project" value="UniProtKB"/>
</dbReference>
<dbReference type="GO" id="GO:0009644">
    <property type="term" value="P:response to high light intensity"/>
    <property type="evidence" value="ECO:0000270"/>
    <property type="project" value="UniProtKB"/>
</dbReference>
<dbReference type="GO" id="GO:0009645">
    <property type="term" value="P:response to low light intensity stimulus"/>
    <property type="evidence" value="ECO:0000270"/>
    <property type="project" value="UniProtKB"/>
</dbReference>
<dbReference type="FunFam" id="1.10.3460.10:FF:000002">
    <property type="entry name" value="Chlorophyll a-b binding protein, chloroplastic"/>
    <property type="match status" value="1"/>
</dbReference>
<dbReference type="Gene3D" id="1.10.3460.10">
    <property type="entry name" value="Chlorophyll a/b binding protein domain"/>
    <property type="match status" value="1"/>
</dbReference>
<dbReference type="InterPro" id="IPR001344">
    <property type="entry name" value="Chloro_AB-bd_pln"/>
</dbReference>
<dbReference type="InterPro" id="IPR022796">
    <property type="entry name" value="Chloroa_b-bind"/>
</dbReference>
<dbReference type="PANTHER" id="PTHR21649">
    <property type="entry name" value="CHLOROPHYLL A/B BINDING PROTEIN"/>
    <property type="match status" value="1"/>
</dbReference>
<dbReference type="Pfam" id="PF00504">
    <property type="entry name" value="Chloroa_b-bind"/>
    <property type="match status" value="1"/>
</dbReference>
<dbReference type="SUPFAM" id="SSF103511">
    <property type="entry name" value="Chlorophyll a-b binding protein"/>
    <property type="match status" value="1"/>
</dbReference>
<organism>
    <name type="scientific">Arabidopsis thaliana</name>
    <name type="common">Mouse-ear cress</name>
    <dbReference type="NCBI Taxonomy" id="3702"/>
    <lineage>
        <taxon>Eukaryota</taxon>
        <taxon>Viridiplantae</taxon>
        <taxon>Streptophyta</taxon>
        <taxon>Embryophyta</taxon>
        <taxon>Tracheophyta</taxon>
        <taxon>Spermatophyta</taxon>
        <taxon>Magnoliopsida</taxon>
        <taxon>eudicotyledons</taxon>
        <taxon>Gunneridae</taxon>
        <taxon>Pentapetalae</taxon>
        <taxon>rosids</taxon>
        <taxon>malvids</taxon>
        <taxon>Brassicales</taxon>
        <taxon>Brassicaceae</taxon>
        <taxon>Camelineae</taxon>
        <taxon>Arabidopsis</taxon>
    </lineage>
</organism>
<proteinExistence type="evidence at protein level"/>
<accession>P27521</accession>
<protein>
    <recommendedName>
        <fullName evidence="9">Chlorophyll a-b binding protein 4, chloroplastic</fullName>
    </recommendedName>
    <alternativeName>
        <fullName>LHCI type III CAB-4</fullName>
    </alternativeName>
</protein>
<name>CA4_ARATH</name>
<comment type="function">
    <text evidence="8">The light-harvesting complex (LHC) functions as a light receptor, it captures and delivers excitation energy to photosystems with which it is closely associated.</text>
</comment>
<comment type="cofactor">
    <text evidence="6 7">Binds at least 14 chlorophylls (8 Chl-a and 6 Chl-b) and carotenoids such as lutein and neoxanthin.</text>
</comment>
<comment type="subunit">
    <text evidence="7">The LHC complex consists of chlorophyll a-b binding proteins. Red-emitting heterodimer with LHCA1 (PubMed:21083539).</text>
</comment>
<comment type="subcellular location">
    <subcellularLocation>
        <location evidence="3 4">Plastid</location>
        <location evidence="3 4">Chloroplast thylakoid membrane</location>
        <topology evidence="2">Multi-pass membrane protein</topology>
    </subcellularLocation>
</comment>
<comment type="induction">
    <text evidence="5">Induced by low light (LL) but repressed by high light (HL). Inhibited by cold.</text>
</comment>
<comment type="domain">
    <text>The N-terminus of the protein extends into the stroma where it is involved with adhesion of granal membranes and post-translational modifications; both are believed to mediate the distribution of excitation energy between photosystems I and II.</text>
</comment>
<comment type="PTM">
    <text evidence="1">Photoregulated by reversible phosphorylation of its threonine residues.</text>
</comment>
<comment type="miscellaneous">
    <text evidence="8">Light emission at 715-720 nm upon excitation at 440 and 475 nm, and subsequent transfer of excitation energy to the photosystem I core with a relative slow rate of 25 nsec(-1).</text>
</comment>
<comment type="similarity">
    <text evidence="10">Belongs to the light-harvesting chlorophyll a/b-binding (LHC) protein family.</text>
</comment>
<sequence>MATVTTHASASIFRPCTSKPRFLTGSSGRLNRDLSFTSIGSSAKTSSFKVEAKKGEWLPGLASPDYLTGSLAGDNGFDPLGLAEDPENLKWFVQAELVNGRWAMLGVAGMLLPEVFTKIGIINVPEWYDAGKEQYFASSSTLFVIEFILFHYVEIRRWQDIKNPGSVNQDPIFKQYSLPKGEVGYPGGIFNPLNFAPTQEAKEKELANGRLAMLAFLGFVVQHNVTGKGPFENLLQHLSDPWHNTIVQTFN</sequence>
<reference key="1">
    <citation type="journal article" date="1991" name="Plant Physiol.">
        <title>Isolation, characterization and chromosomal location of a new cab gene from Arabidopsis thaliana.</title>
        <authorList>
            <person name="Zhang H."/>
            <person name="Hanley S."/>
            <person name="Goodman H.M."/>
        </authorList>
    </citation>
    <scope>NUCLEOTIDE SEQUENCE [MRNA]</scope>
    <source>
        <strain>cv. Columbia</strain>
    </source>
</reference>
<reference key="2">
    <citation type="journal article" date="2000" name="Nature">
        <title>Sequence and analysis of chromosome 3 of the plant Arabidopsis thaliana.</title>
        <authorList>
            <person name="Salanoubat M."/>
            <person name="Lemcke K."/>
            <person name="Rieger M."/>
            <person name="Ansorge W."/>
            <person name="Unseld M."/>
            <person name="Fartmann B."/>
            <person name="Valle G."/>
            <person name="Bloecker H."/>
            <person name="Perez-Alonso M."/>
            <person name="Obermaier B."/>
            <person name="Delseny M."/>
            <person name="Boutry M."/>
            <person name="Grivell L.A."/>
            <person name="Mache R."/>
            <person name="Puigdomenech P."/>
            <person name="De Simone V."/>
            <person name="Choisne N."/>
            <person name="Artiguenave F."/>
            <person name="Robert C."/>
            <person name="Brottier P."/>
            <person name="Wincker P."/>
            <person name="Cattolico L."/>
            <person name="Weissenbach J."/>
            <person name="Saurin W."/>
            <person name="Quetier F."/>
            <person name="Schaefer M."/>
            <person name="Mueller-Auer S."/>
            <person name="Gabel C."/>
            <person name="Fuchs M."/>
            <person name="Benes V."/>
            <person name="Wurmbach E."/>
            <person name="Drzonek H."/>
            <person name="Erfle H."/>
            <person name="Jordan N."/>
            <person name="Bangert S."/>
            <person name="Wiedelmann R."/>
            <person name="Kranz H."/>
            <person name="Voss H."/>
            <person name="Holland R."/>
            <person name="Brandt P."/>
            <person name="Nyakatura G."/>
            <person name="Vezzi A."/>
            <person name="D'Angelo M."/>
            <person name="Pallavicini A."/>
            <person name="Toppo S."/>
            <person name="Simionati B."/>
            <person name="Conrad A."/>
            <person name="Hornischer K."/>
            <person name="Kauer G."/>
            <person name="Loehnert T.-H."/>
            <person name="Nordsiek G."/>
            <person name="Reichelt J."/>
            <person name="Scharfe M."/>
            <person name="Schoen O."/>
            <person name="Bargues M."/>
            <person name="Terol J."/>
            <person name="Climent J."/>
            <person name="Navarro P."/>
            <person name="Collado C."/>
            <person name="Perez-Perez A."/>
            <person name="Ottenwaelder B."/>
            <person name="Duchemin D."/>
            <person name="Cooke R."/>
            <person name="Laudie M."/>
            <person name="Berger-Llauro C."/>
            <person name="Purnelle B."/>
            <person name="Masuy D."/>
            <person name="de Haan M."/>
            <person name="Maarse A.C."/>
            <person name="Alcaraz J.-P."/>
            <person name="Cottet A."/>
            <person name="Casacuberta E."/>
            <person name="Monfort A."/>
            <person name="Argiriou A."/>
            <person name="Flores M."/>
            <person name="Liguori R."/>
            <person name="Vitale D."/>
            <person name="Mannhaupt G."/>
            <person name="Haase D."/>
            <person name="Schoof H."/>
            <person name="Rudd S."/>
            <person name="Zaccaria P."/>
            <person name="Mewes H.-W."/>
            <person name="Mayer K.F.X."/>
            <person name="Kaul S."/>
            <person name="Town C.D."/>
            <person name="Koo H.L."/>
            <person name="Tallon L.J."/>
            <person name="Jenkins J."/>
            <person name="Rooney T."/>
            <person name="Rizzo M."/>
            <person name="Walts A."/>
            <person name="Utterback T."/>
            <person name="Fujii C.Y."/>
            <person name="Shea T.P."/>
            <person name="Creasy T.H."/>
            <person name="Haas B."/>
            <person name="Maiti R."/>
            <person name="Wu D."/>
            <person name="Peterson J."/>
            <person name="Van Aken S."/>
            <person name="Pai G."/>
            <person name="Militscher J."/>
            <person name="Sellers P."/>
            <person name="Gill J.E."/>
            <person name="Feldblyum T.V."/>
            <person name="Preuss D."/>
            <person name="Lin X."/>
            <person name="Nierman W.C."/>
            <person name="Salzberg S.L."/>
            <person name="White O."/>
            <person name="Venter J.C."/>
            <person name="Fraser C.M."/>
            <person name="Kaneko T."/>
            <person name="Nakamura Y."/>
            <person name="Sato S."/>
            <person name="Kato T."/>
            <person name="Asamizu E."/>
            <person name="Sasamoto S."/>
            <person name="Kimura T."/>
            <person name="Idesawa K."/>
            <person name="Kawashima K."/>
            <person name="Kishida Y."/>
            <person name="Kiyokawa C."/>
            <person name="Kohara M."/>
            <person name="Matsumoto M."/>
            <person name="Matsuno A."/>
            <person name="Muraki A."/>
            <person name="Nakayama S."/>
            <person name="Nakazaki N."/>
            <person name="Shinpo S."/>
            <person name="Takeuchi C."/>
            <person name="Wada T."/>
            <person name="Watanabe A."/>
            <person name="Yamada M."/>
            <person name="Yasuda M."/>
            <person name="Tabata S."/>
        </authorList>
    </citation>
    <scope>NUCLEOTIDE SEQUENCE [LARGE SCALE GENOMIC DNA]</scope>
    <source>
        <strain>cv. Columbia</strain>
    </source>
</reference>
<reference key="3">
    <citation type="journal article" date="2017" name="Plant J.">
        <title>Araport11: a complete reannotation of the Arabidopsis thaliana reference genome.</title>
        <authorList>
            <person name="Cheng C.Y."/>
            <person name="Krishnakumar V."/>
            <person name="Chan A.P."/>
            <person name="Thibaud-Nissen F."/>
            <person name="Schobel S."/>
            <person name="Town C.D."/>
        </authorList>
    </citation>
    <scope>GENOME REANNOTATION</scope>
    <source>
        <strain>cv. Columbia</strain>
    </source>
</reference>
<reference key="4">
    <citation type="journal article" date="2003" name="Science">
        <title>Empirical analysis of transcriptional activity in the Arabidopsis genome.</title>
        <authorList>
            <person name="Yamada K."/>
            <person name="Lim J."/>
            <person name="Dale J.M."/>
            <person name="Chen H."/>
            <person name="Shinn P."/>
            <person name="Palm C.J."/>
            <person name="Southwick A.M."/>
            <person name="Wu H.C."/>
            <person name="Kim C.J."/>
            <person name="Nguyen M."/>
            <person name="Pham P.K."/>
            <person name="Cheuk R.F."/>
            <person name="Karlin-Newmann G."/>
            <person name="Liu S.X."/>
            <person name="Lam B."/>
            <person name="Sakano H."/>
            <person name="Wu T."/>
            <person name="Yu G."/>
            <person name="Miranda M."/>
            <person name="Quach H.L."/>
            <person name="Tripp M."/>
            <person name="Chang C.H."/>
            <person name="Lee J.M."/>
            <person name="Toriumi M.J."/>
            <person name="Chan M.M."/>
            <person name="Tang C.C."/>
            <person name="Onodera C.S."/>
            <person name="Deng J.M."/>
            <person name="Akiyama K."/>
            <person name="Ansari Y."/>
            <person name="Arakawa T."/>
            <person name="Banh J."/>
            <person name="Banno F."/>
            <person name="Bowser L."/>
            <person name="Brooks S.Y."/>
            <person name="Carninci P."/>
            <person name="Chao Q."/>
            <person name="Choy N."/>
            <person name="Enju A."/>
            <person name="Goldsmith A.D."/>
            <person name="Gurjal M."/>
            <person name="Hansen N.F."/>
            <person name="Hayashizaki Y."/>
            <person name="Johnson-Hopson C."/>
            <person name="Hsuan V.W."/>
            <person name="Iida K."/>
            <person name="Karnes M."/>
            <person name="Khan S."/>
            <person name="Koesema E."/>
            <person name="Ishida J."/>
            <person name="Jiang P.X."/>
            <person name="Jones T."/>
            <person name="Kawai J."/>
            <person name="Kamiya A."/>
            <person name="Meyers C."/>
            <person name="Nakajima M."/>
            <person name="Narusaka M."/>
            <person name="Seki M."/>
            <person name="Sakurai T."/>
            <person name="Satou M."/>
            <person name="Tamse R."/>
            <person name="Vaysberg M."/>
            <person name="Wallender E.K."/>
            <person name="Wong C."/>
            <person name="Yamamura Y."/>
            <person name="Yuan S."/>
            <person name="Shinozaki K."/>
            <person name="Davis R.W."/>
            <person name="Theologis A."/>
            <person name="Ecker J.R."/>
        </authorList>
    </citation>
    <scope>NUCLEOTIDE SEQUENCE [LARGE SCALE MRNA]</scope>
    <source>
        <strain>cv. Columbia</strain>
    </source>
</reference>
<reference key="5">
    <citation type="submission" date="2002-03" db="EMBL/GenBank/DDBJ databases">
        <title>Full-length cDNA from Arabidopsis thaliana.</title>
        <authorList>
            <person name="Brover V.V."/>
            <person name="Troukhan M.E."/>
            <person name="Alexandrov N.A."/>
            <person name="Lu Y.-P."/>
            <person name="Flavell R.B."/>
            <person name="Feldmann K.A."/>
        </authorList>
    </citation>
    <scope>NUCLEOTIDE SEQUENCE [LARGE SCALE MRNA]</scope>
</reference>
<reference key="6">
    <citation type="journal article" date="1999" name="Trends Plant Sci.">
        <title>A guide to the Lhc genes and their relatives in Arabidopsis.</title>
        <authorList>
            <person name="Jansson S."/>
        </authorList>
    </citation>
    <scope>GENE FAMILY</scope>
    <scope>NOMENCLATURE</scope>
</reference>
<reference key="7">
    <citation type="journal article" date="2000" name="J. Biol. Chem.">
        <title>The PSI-K subunit of photosystem I is involved in the interaction between light-harvesting complex I and the photosystem I reaction center core.</title>
        <authorList>
            <person name="Jensen P.E."/>
            <person name="Gilpin M."/>
            <person name="Knoetzel J."/>
            <person name="Scheller H.V."/>
        </authorList>
    </citation>
    <scope>SUBCELLULAR LOCATION</scope>
    <source>
        <strain>cv. Columbia</strain>
    </source>
</reference>
<reference key="8">
    <citation type="journal article" date="2002" name="Biophys. J.">
        <title>Pigment organization and energy transfer dynamics in isolated photosystem I (PSI) complexes from Arabidopsis thaliana depleted of the PSI-G, PSI-K, PSI-L, or PSI-N subunit.</title>
        <authorList>
            <person name="Ihalainen J.A."/>
            <person name="Jensen P.E."/>
            <person name="Haldrup A."/>
            <person name="van Stokkum I.H.M."/>
            <person name="van Grondelle R."/>
            <person name="Scheller H.V."/>
            <person name="Dekker J.P."/>
        </authorList>
    </citation>
    <scope>REVIEW ON PHOTOSYSTEM I ANTENNA</scope>
</reference>
<reference key="9">
    <citation type="journal article" date="2003" name="Mol. Cell. Proteomics">
        <title>Proteomics of the chloroplast envelope membranes from Arabidopsis thaliana.</title>
        <authorList>
            <person name="Ferro M."/>
            <person name="Salvi D."/>
            <person name="Brugiere S."/>
            <person name="Miras S."/>
            <person name="Kowalski S."/>
            <person name="Louwagie M."/>
            <person name="Garin J."/>
            <person name="Joyard J."/>
            <person name="Rolland N."/>
        </authorList>
    </citation>
    <scope>IDENTIFICATION BY MASS SPECTROMETRY</scope>
    <scope>SUBCELLULAR LOCATION [LARGE SCALE ANALYSIS]</scope>
    <source>
        <strain>cv. Wassilewskija</strain>
    </source>
</reference>
<reference key="10">
    <citation type="journal article" date="2004" name="Plant Mol. Biol.">
        <title>Lhca5--an LHC-type protein associated with photosystem I.</title>
        <authorList>
            <person name="Ganeteg U."/>
            <person name="Klimmek F."/>
            <person name="Jansson S."/>
        </authorList>
    </citation>
    <scope>INDUCTION BY LIGHT AND COLD</scope>
    <source>
        <strain>cv. C24</strain>
        <strain>cv. Columbia</strain>
    </source>
</reference>
<reference key="11">
    <citation type="journal article" date="2005" name="J. Biol. Chem.">
        <title>Pigment binding, fluorescence properties, and oligomerization behavior of Lhca5, a novel light-harvesting protein.</title>
        <authorList>
            <person name="Storf S."/>
            <person name="Jansson S."/>
            <person name="Schmid V.H.R."/>
        </authorList>
    </citation>
    <scope>COFACTOR</scope>
</reference>
<reference key="12">
    <citation type="journal article" date="2009" name="Plant Physiol.">
        <title>Large-scale Arabidopsis phosphoproteome profiling reveals novel chloroplast kinase substrates and phosphorylation networks.</title>
        <authorList>
            <person name="Reiland S."/>
            <person name="Messerli G."/>
            <person name="Baerenfaller K."/>
            <person name="Gerrits B."/>
            <person name="Endler A."/>
            <person name="Grossmann J."/>
            <person name="Gruissem W."/>
            <person name="Baginsky S."/>
        </authorList>
    </citation>
    <scope>PHOSPHORYLATION [LARGE SCALE ANALYSIS] AT SER-35</scope>
    <scope>IDENTIFICATION BY MASS SPECTROMETRY [LARGE SCALE ANALYSIS]</scope>
</reference>
<reference key="13">
    <citation type="journal article" date="2011" name="Biochem. J.">
        <title>The light-harvesting complexes of higher-plant Photosystem I: Lhca1/4 and Lhca2/3 form two red-emitting heterodimers.</title>
        <authorList>
            <person name="Wientjes E."/>
            <person name="Croce R."/>
        </authorList>
    </citation>
    <scope>SUBUNIT</scope>
    <scope>COFACTOR</scope>
    <source>
        <strain>cv. Columbia</strain>
    </source>
</reference>
<reference key="14">
    <citation type="journal article" date="2011" name="Biophys. J.">
        <title>The role of the individual Lhcas in photosystem I excitation energy trapping.</title>
        <authorList>
            <person name="Wientjes E."/>
            <person name="van Stokkum I.H.M."/>
            <person name="van Amerongen H."/>
            <person name="Croce R."/>
        </authorList>
    </citation>
    <scope>FUNCTION</scope>
    <scope>MISCELLANEOUS</scope>
</reference>
<feature type="transit peptide" description="Chloroplast" evidence="2">
    <location>
        <begin position="1"/>
        <end status="unknown"/>
    </location>
</feature>
<feature type="chain" id="PRO_0000003649" description="Chlorophyll a-b binding protein 4, chloroplastic">
    <location>
        <begin status="unknown"/>
        <end position="251"/>
    </location>
</feature>
<feature type="transmembrane region" description="Helical" evidence="2">
    <location>
        <begin position="102"/>
        <end position="122"/>
    </location>
</feature>
<feature type="transmembrane region" description="Helical" evidence="2">
    <location>
        <begin position="135"/>
        <end position="155"/>
    </location>
</feature>
<feature type="binding site" description="axial binding residue" evidence="1">
    <location>
        <position position="57"/>
    </location>
    <ligand>
        <name>chlorophyll b</name>
        <dbReference type="ChEBI" id="CHEBI:61721"/>
        <label>1</label>
    </ligand>
    <ligandPart>
        <name>Mg</name>
        <dbReference type="ChEBI" id="CHEBI:25107"/>
    </ligandPart>
</feature>
<feature type="binding site" evidence="1">
    <location>
        <position position="77"/>
    </location>
    <ligand>
        <name>chlorophyll a</name>
        <dbReference type="ChEBI" id="CHEBI:58416"/>
        <label>1</label>
    </ligand>
</feature>
<feature type="binding site" description="axial binding residue" evidence="1">
    <location>
        <position position="96"/>
    </location>
    <ligand>
        <name>chlorophyll a</name>
        <dbReference type="ChEBI" id="CHEBI:58416"/>
        <label>1</label>
    </ligand>
    <ligandPart>
        <name>Mg</name>
        <dbReference type="ChEBI" id="CHEBI:25107"/>
    </ligandPart>
</feature>
<feature type="binding site" evidence="1">
    <location>
        <position position="101"/>
    </location>
    <ligand>
        <name>chlorophyll b</name>
        <dbReference type="ChEBI" id="CHEBI:61721"/>
        <label>2</label>
    </ligand>
</feature>
<feature type="binding site" evidence="1">
    <location>
        <position position="138"/>
    </location>
    <ligand>
        <name>chlorophyll b</name>
        <dbReference type="ChEBI" id="CHEBI:61721"/>
        <label>3</label>
    </ligand>
</feature>
<feature type="binding site" description="axial binding residue" evidence="1">
    <location>
        <position position="144"/>
    </location>
    <ligand>
        <name>chlorophyll b</name>
        <dbReference type="ChEBI" id="CHEBI:61721"/>
        <label>2</label>
    </ligand>
    <ligandPart>
        <name>Mg</name>
        <dbReference type="ChEBI" id="CHEBI:25107"/>
    </ligandPart>
</feature>
<feature type="binding site" description="axial binding residue" evidence="1">
    <location>
        <position position="154"/>
    </location>
    <ligand>
        <name>chlorophyll b</name>
        <dbReference type="ChEBI" id="CHEBI:61721"/>
        <label>3</label>
    </ligand>
    <ligandPart>
        <name>Mg</name>
        <dbReference type="ChEBI" id="CHEBI:25107"/>
    </ligandPart>
</feature>
<feature type="binding site" evidence="1">
    <location>
        <position position="157"/>
    </location>
    <ligand>
        <name>chlorophyll b</name>
        <dbReference type="ChEBI" id="CHEBI:61721"/>
        <label>4</label>
    </ligand>
</feature>
<feature type="binding site" evidence="1">
    <location>
        <position position="204"/>
    </location>
    <ligand>
        <name>chlorophyll a</name>
        <dbReference type="ChEBI" id="CHEBI:58416"/>
        <label>5</label>
    </ligand>
</feature>
<feature type="binding site" description="axial binding residue" evidence="1">
    <location>
        <position position="205"/>
    </location>
    <ligand>
        <name>chlorophyll a</name>
        <dbReference type="ChEBI" id="CHEBI:58416"/>
        <label>3</label>
    </ligand>
    <ligandPart>
        <name>Mg</name>
        <dbReference type="ChEBI" id="CHEBI:25107"/>
    </ligandPart>
</feature>
<feature type="binding site" description="axial binding residue" evidence="1">
    <location>
        <position position="208"/>
    </location>
    <ligand>
        <name>chlorophyll a</name>
        <dbReference type="ChEBI" id="CHEBI:58416"/>
        <label>4</label>
    </ligand>
    <ligandPart>
        <name>Mg</name>
        <dbReference type="ChEBI" id="CHEBI:25107"/>
    </ligandPart>
</feature>
<feature type="binding site" evidence="1">
    <location>
        <position position="210"/>
    </location>
    <ligand>
        <name>chlorophyll a</name>
        <dbReference type="ChEBI" id="CHEBI:58416"/>
        <label>1</label>
    </ligand>
</feature>
<feature type="binding site" description="axial binding residue" evidence="1">
    <location>
        <position position="222"/>
    </location>
    <ligand>
        <name>chlorophyll a</name>
        <dbReference type="ChEBI" id="CHEBI:58416"/>
        <label>5</label>
    </ligand>
    <ligandPart>
        <name>Mg</name>
        <dbReference type="ChEBI" id="CHEBI:25107"/>
    </ligandPart>
</feature>
<feature type="binding site" description="axial binding residue" evidence="1">
    <location>
        <position position="237"/>
    </location>
    <ligand>
        <name>chlorophyll a</name>
        <dbReference type="ChEBI" id="CHEBI:58416"/>
        <label>6</label>
    </ligand>
    <ligandPart>
        <name>Mg</name>
        <dbReference type="ChEBI" id="CHEBI:25107"/>
    </ligandPart>
</feature>
<feature type="modified residue" description="Phosphoserine" evidence="11">
    <location>
        <position position="35"/>
    </location>
</feature>
<feature type="helix" evidence="12">
    <location>
        <begin position="82"/>
        <end position="84"/>
    </location>
</feature>
<feature type="helix" evidence="12">
    <location>
        <begin position="86"/>
        <end position="119"/>
    </location>
</feature>
<feature type="turn" evidence="12">
    <location>
        <begin position="127"/>
        <end position="132"/>
    </location>
</feature>
<feature type="helix" evidence="12">
    <location>
        <begin position="139"/>
        <end position="162"/>
    </location>
</feature>
<feature type="strand" evidence="12">
    <location>
        <begin position="171"/>
        <end position="173"/>
    </location>
</feature>
<feature type="helix" evidence="12">
    <location>
        <begin position="188"/>
        <end position="190"/>
    </location>
</feature>
<feature type="helix" evidence="12">
    <location>
        <begin position="199"/>
        <end position="226"/>
    </location>
</feature>
<feature type="helix" evidence="12">
    <location>
        <begin position="230"/>
        <end position="239"/>
    </location>
</feature>
<feature type="turn" evidence="12">
    <location>
        <begin position="241"/>
        <end position="243"/>
    </location>
</feature>
<feature type="strand" evidence="12">
    <location>
        <begin position="244"/>
        <end position="247"/>
    </location>
</feature>